<organism>
    <name type="scientific">Shewanella piezotolerans (strain WP3 / JCM 13877)</name>
    <dbReference type="NCBI Taxonomy" id="225849"/>
    <lineage>
        <taxon>Bacteria</taxon>
        <taxon>Pseudomonadati</taxon>
        <taxon>Pseudomonadota</taxon>
        <taxon>Gammaproteobacteria</taxon>
        <taxon>Alteromonadales</taxon>
        <taxon>Shewanellaceae</taxon>
        <taxon>Shewanella</taxon>
    </lineage>
</organism>
<feature type="chain" id="PRO_1000118556" description="Glycerol kinase">
    <location>
        <begin position="1"/>
        <end position="493"/>
    </location>
</feature>
<feature type="binding site" evidence="1">
    <location>
        <position position="13"/>
    </location>
    <ligand>
        <name>ADP</name>
        <dbReference type="ChEBI" id="CHEBI:456216"/>
    </ligand>
</feature>
<feature type="binding site" evidence="1">
    <location>
        <position position="13"/>
    </location>
    <ligand>
        <name>ATP</name>
        <dbReference type="ChEBI" id="CHEBI:30616"/>
    </ligand>
</feature>
<feature type="binding site" evidence="1">
    <location>
        <position position="13"/>
    </location>
    <ligand>
        <name>sn-glycerol 3-phosphate</name>
        <dbReference type="ChEBI" id="CHEBI:57597"/>
    </ligand>
</feature>
<feature type="binding site" evidence="1">
    <location>
        <position position="14"/>
    </location>
    <ligand>
        <name>ATP</name>
        <dbReference type="ChEBI" id="CHEBI:30616"/>
    </ligand>
</feature>
<feature type="binding site" evidence="1">
    <location>
        <position position="15"/>
    </location>
    <ligand>
        <name>ATP</name>
        <dbReference type="ChEBI" id="CHEBI:30616"/>
    </ligand>
</feature>
<feature type="binding site" evidence="1">
    <location>
        <position position="17"/>
    </location>
    <ligand>
        <name>ADP</name>
        <dbReference type="ChEBI" id="CHEBI:456216"/>
    </ligand>
</feature>
<feature type="binding site" evidence="1">
    <location>
        <position position="83"/>
    </location>
    <ligand>
        <name>glycerol</name>
        <dbReference type="ChEBI" id="CHEBI:17754"/>
    </ligand>
</feature>
<feature type="binding site" evidence="1">
    <location>
        <position position="83"/>
    </location>
    <ligand>
        <name>sn-glycerol 3-phosphate</name>
        <dbReference type="ChEBI" id="CHEBI:57597"/>
    </ligand>
</feature>
<feature type="binding site" evidence="1">
    <location>
        <position position="84"/>
    </location>
    <ligand>
        <name>glycerol</name>
        <dbReference type="ChEBI" id="CHEBI:17754"/>
    </ligand>
</feature>
<feature type="binding site" evidence="1">
    <location>
        <position position="84"/>
    </location>
    <ligand>
        <name>sn-glycerol 3-phosphate</name>
        <dbReference type="ChEBI" id="CHEBI:57597"/>
    </ligand>
</feature>
<feature type="binding site" evidence="1">
    <location>
        <position position="135"/>
    </location>
    <ligand>
        <name>glycerol</name>
        <dbReference type="ChEBI" id="CHEBI:17754"/>
    </ligand>
</feature>
<feature type="binding site" evidence="1">
    <location>
        <position position="135"/>
    </location>
    <ligand>
        <name>sn-glycerol 3-phosphate</name>
        <dbReference type="ChEBI" id="CHEBI:57597"/>
    </ligand>
</feature>
<feature type="binding site" evidence="1">
    <location>
        <position position="244"/>
    </location>
    <ligand>
        <name>glycerol</name>
        <dbReference type="ChEBI" id="CHEBI:17754"/>
    </ligand>
</feature>
<feature type="binding site" evidence="1">
    <location>
        <position position="244"/>
    </location>
    <ligand>
        <name>sn-glycerol 3-phosphate</name>
        <dbReference type="ChEBI" id="CHEBI:57597"/>
    </ligand>
</feature>
<feature type="binding site" evidence="1">
    <location>
        <position position="245"/>
    </location>
    <ligand>
        <name>glycerol</name>
        <dbReference type="ChEBI" id="CHEBI:17754"/>
    </ligand>
</feature>
<feature type="binding site" evidence="1">
    <location>
        <position position="266"/>
    </location>
    <ligand>
        <name>ADP</name>
        <dbReference type="ChEBI" id="CHEBI:456216"/>
    </ligand>
</feature>
<feature type="binding site" evidence="1">
    <location>
        <position position="266"/>
    </location>
    <ligand>
        <name>ATP</name>
        <dbReference type="ChEBI" id="CHEBI:30616"/>
    </ligand>
</feature>
<feature type="binding site" evidence="1">
    <location>
        <position position="309"/>
    </location>
    <ligand>
        <name>ADP</name>
        <dbReference type="ChEBI" id="CHEBI:456216"/>
    </ligand>
</feature>
<feature type="binding site" evidence="1">
    <location>
        <position position="309"/>
    </location>
    <ligand>
        <name>ATP</name>
        <dbReference type="ChEBI" id="CHEBI:30616"/>
    </ligand>
</feature>
<feature type="binding site" evidence="1">
    <location>
        <position position="313"/>
    </location>
    <ligand>
        <name>ATP</name>
        <dbReference type="ChEBI" id="CHEBI:30616"/>
    </ligand>
</feature>
<feature type="binding site" evidence="1">
    <location>
        <position position="410"/>
    </location>
    <ligand>
        <name>ADP</name>
        <dbReference type="ChEBI" id="CHEBI:456216"/>
    </ligand>
</feature>
<feature type="binding site" evidence="1">
    <location>
        <position position="410"/>
    </location>
    <ligand>
        <name>ATP</name>
        <dbReference type="ChEBI" id="CHEBI:30616"/>
    </ligand>
</feature>
<feature type="binding site" evidence="1">
    <location>
        <position position="414"/>
    </location>
    <ligand>
        <name>ADP</name>
        <dbReference type="ChEBI" id="CHEBI:456216"/>
    </ligand>
</feature>
<name>GLPK_SHEPW</name>
<accession>B8CM45</accession>
<proteinExistence type="inferred from homology"/>
<protein>
    <recommendedName>
        <fullName evidence="1">Glycerol kinase</fullName>
        <ecNumber evidence="1">2.7.1.30</ecNumber>
    </recommendedName>
    <alternativeName>
        <fullName evidence="1">ATP:glycerol 3-phosphotransferase</fullName>
    </alternativeName>
    <alternativeName>
        <fullName evidence="1">Glycerokinase</fullName>
        <shortName evidence="1">GK</shortName>
    </alternativeName>
</protein>
<comment type="function">
    <text evidence="1">Key enzyme in the regulation of glycerol uptake and metabolism. Catalyzes the phosphorylation of glycerol to yield sn-glycerol 3-phosphate.</text>
</comment>
<comment type="catalytic activity">
    <reaction evidence="1">
        <text>glycerol + ATP = sn-glycerol 3-phosphate + ADP + H(+)</text>
        <dbReference type="Rhea" id="RHEA:21644"/>
        <dbReference type="ChEBI" id="CHEBI:15378"/>
        <dbReference type="ChEBI" id="CHEBI:17754"/>
        <dbReference type="ChEBI" id="CHEBI:30616"/>
        <dbReference type="ChEBI" id="CHEBI:57597"/>
        <dbReference type="ChEBI" id="CHEBI:456216"/>
        <dbReference type="EC" id="2.7.1.30"/>
    </reaction>
</comment>
<comment type="activity regulation">
    <text evidence="1">Inhibited by fructose 1,6-bisphosphate (FBP).</text>
</comment>
<comment type="pathway">
    <text evidence="1">Polyol metabolism; glycerol degradation via glycerol kinase pathway; sn-glycerol 3-phosphate from glycerol: step 1/1.</text>
</comment>
<comment type="similarity">
    <text evidence="1">Belongs to the FGGY kinase family.</text>
</comment>
<sequence>MSKKYVIALDQGTTSSRAIVFDHDANMVASSQREFGQIYPQPGWVEHDAMEIWASQSSTLIEALARADIHSEDVAAIGITNQRETTVIWDKMTGKPVYNAIVWQCRRSKAICDELKAQGLEEYVKDCTGLLLDPYFSGTKIKWILDNVEGVRERAEKGELLFGTIDTWLVWKLTEGKVHVTDPTNASRTLLFNIHQQAWDEKLLNALGIPRSLLPEVKPSSAIYGQTRIAGEGSSIAIAGIAGDQQSALFGQLCIDEGMAKNTYGTGCFLLMNTGTEAVKSQQGLLTTIAVGAKGEVNYALEGSVFMGGATIQWLRDELGLIRDAQDTEYFASKVENTNGVYLVPAFVGLGAPYWDPDARGALVGLTRGANRNHIIRAALEAIAYQSRDLLDAMSKDSGVELKQIKVDGGAVANDFLMQFQADITNVDVLRPELTETTAMGAAFLAGLAVGFWSSTAELKHKAGIERRFKPKINDAQRATLYDGWKEAVARTR</sequence>
<dbReference type="EC" id="2.7.1.30" evidence="1"/>
<dbReference type="EMBL" id="CP000472">
    <property type="protein sequence ID" value="ACJ28969.1"/>
    <property type="molecule type" value="Genomic_DNA"/>
</dbReference>
<dbReference type="RefSeq" id="WP_020912330.1">
    <property type="nucleotide sequence ID" value="NC_011566.1"/>
</dbReference>
<dbReference type="SMR" id="B8CM45"/>
<dbReference type="STRING" id="225849.swp_2219"/>
<dbReference type="KEGG" id="swp:swp_2219"/>
<dbReference type="eggNOG" id="COG0554">
    <property type="taxonomic scope" value="Bacteria"/>
</dbReference>
<dbReference type="HOGENOM" id="CLU_009281_2_3_6"/>
<dbReference type="OrthoDB" id="9805576at2"/>
<dbReference type="UniPathway" id="UPA00618">
    <property type="reaction ID" value="UER00672"/>
</dbReference>
<dbReference type="Proteomes" id="UP000000753">
    <property type="component" value="Chromosome"/>
</dbReference>
<dbReference type="GO" id="GO:0005829">
    <property type="term" value="C:cytosol"/>
    <property type="evidence" value="ECO:0007669"/>
    <property type="project" value="TreeGrafter"/>
</dbReference>
<dbReference type="GO" id="GO:0005524">
    <property type="term" value="F:ATP binding"/>
    <property type="evidence" value="ECO:0007669"/>
    <property type="project" value="UniProtKB-UniRule"/>
</dbReference>
<dbReference type="GO" id="GO:0004370">
    <property type="term" value="F:glycerol kinase activity"/>
    <property type="evidence" value="ECO:0000250"/>
    <property type="project" value="UniProtKB"/>
</dbReference>
<dbReference type="GO" id="GO:0019563">
    <property type="term" value="P:glycerol catabolic process"/>
    <property type="evidence" value="ECO:0007669"/>
    <property type="project" value="UniProtKB-UniRule"/>
</dbReference>
<dbReference type="GO" id="GO:0006071">
    <property type="term" value="P:glycerol metabolic process"/>
    <property type="evidence" value="ECO:0000250"/>
    <property type="project" value="UniProtKB"/>
</dbReference>
<dbReference type="GO" id="GO:0006072">
    <property type="term" value="P:glycerol-3-phosphate metabolic process"/>
    <property type="evidence" value="ECO:0007669"/>
    <property type="project" value="InterPro"/>
</dbReference>
<dbReference type="CDD" id="cd07786">
    <property type="entry name" value="FGGY_EcGK_like"/>
    <property type="match status" value="1"/>
</dbReference>
<dbReference type="FunFam" id="3.30.420.40:FF:000007">
    <property type="entry name" value="Glycerol kinase"/>
    <property type="match status" value="1"/>
</dbReference>
<dbReference type="FunFam" id="3.30.420.40:FF:000008">
    <property type="entry name" value="Glycerol kinase"/>
    <property type="match status" value="1"/>
</dbReference>
<dbReference type="Gene3D" id="3.30.420.40">
    <property type="match status" value="2"/>
</dbReference>
<dbReference type="HAMAP" id="MF_00186">
    <property type="entry name" value="Glycerol_kin"/>
    <property type="match status" value="1"/>
</dbReference>
<dbReference type="InterPro" id="IPR043129">
    <property type="entry name" value="ATPase_NBD"/>
</dbReference>
<dbReference type="InterPro" id="IPR000577">
    <property type="entry name" value="Carb_kinase_FGGY"/>
</dbReference>
<dbReference type="InterPro" id="IPR018483">
    <property type="entry name" value="Carb_kinase_FGGY_CS"/>
</dbReference>
<dbReference type="InterPro" id="IPR018485">
    <property type="entry name" value="FGGY_C"/>
</dbReference>
<dbReference type="InterPro" id="IPR018484">
    <property type="entry name" value="FGGY_N"/>
</dbReference>
<dbReference type="InterPro" id="IPR005999">
    <property type="entry name" value="Glycerol_kin"/>
</dbReference>
<dbReference type="NCBIfam" id="TIGR01311">
    <property type="entry name" value="glycerol_kin"/>
    <property type="match status" value="1"/>
</dbReference>
<dbReference type="NCBIfam" id="NF000756">
    <property type="entry name" value="PRK00047.1"/>
    <property type="match status" value="1"/>
</dbReference>
<dbReference type="PANTHER" id="PTHR10196:SF69">
    <property type="entry name" value="GLYCEROL KINASE"/>
    <property type="match status" value="1"/>
</dbReference>
<dbReference type="PANTHER" id="PTHR10196">
    <property type="entry name" value="SUGAR KINASE"/>
    <property type="match status" value="1"/>
</dbReference>
<dbReference type="Pfam" id="PF02782">
    <property type="entry name" value="FGGY_C"/>
    <property type="match status" value="1"/>
</dbReference>
<dbReference type="Pfam" id="PF00370">
    <property type="entry name" value="FGGY_N"/>
    <property type="match status" value="1"/>
</dbReference>
<dbReference type="PIRSF" id="PIRSF000538">
    <property type="entry name" value="GlpK"/>
    <property type="match status" value="1"/>
</dbReference>
<dbReference type="SUPFAM" id="SSF53067">
    <property type="entry name" value="Actin-like ATPase domain"/>
    <property type="match status" value="2"/>
</dbReference>
<dbReference type="PROSITE" id="PS00933">
    <property type="entry name" value="FGGY_KINASES_1"/>
    <property type="match status" value="1"/>
</dbReference>
<dbReference type="PROSITE" id="PS00445">
    <property type="entry name" value="FGGY_KINASES_2"/>
    <property type="match status" value="1"/>
</dbReference>
<gene>
    <name evidence="1" type="primary">glpK</name>
    <name type="ordered locus">swp_2219</name>
</gene>
<reference key="1">
    <citation type="journal article" date="2008" name="PLoS ONE">
        <title>Environmental adaptation: genomic analysis of the piezotolerant and psychrotolerant deep-sea iron reducing bacterium Shewanella piezotolerans WP3.</title>
        <authorList>
            <person name="Wang F."/>
            <person name="Wang J."/>
            <person name="Jian H."/>
            <person name="Zhang B."/>
            <person name="Li S."/>
            <person name="Wang F."/>
            <person name="Zeng X."/>
            <person name="Gao L."/>
            <person name="Bartlett D.H."/>
            <person name="Yu J."/>
            <person name="Hu S."/>
            <person name="Xiao X."/>
        </authorList>
    </citation>
    <scope>NUCLEOTIDE SEQUENCE [LARGE SCALE GENOMIC DNA]</scope>
    <source>
        <strain>WP3 / JCM 13877</strain>
    </source>
</reference>
<evidence type="ECO:0000255" key="1">
    <source>
        <dbReference type="HAMAP-Rule" id="MF_00186"/>
    </source>
</evidence>
<keyword id="KW-0067">ATP-binding</keyword>
<keyword id="KW-0319">Glycerol metabolism</keyword>
<keyword id="KW-0418">Kinase</keyword>
<keyword id="KW-0547">Nucleotide-binding</keyword>
<keyword id="KW-0808">Transferase</keyword>